<name>RK18_SPIOL</name>
<reference key="1">
    <citation type="journal article" date="2014" name="Nature">
        <title>The genome of the recently domesticated crop plant sugar beet (Beta vulgaris).</title>
        <authorList>
            <person name="Dohm J.C."/>
            <person name="Minoche A.E."/>
            <person name="Holtgraewe D."/>
            <person name="Capella-Gutierrez S."/>
            <person name="Zakrzewski F."/>
            <person name="Tafer H."/>
            <person name="Rupp O."/>
            <person name="Soerensen T.R."/>
            <person name="Stracke R."/>
            <person name="Reinhardt R."/>
            <person name="Goesmann A."/>
            <person name="Kraft T."/>
            <person name="Schulz B."/>
            <person name="Stadler P.F."/>
            <person name="Schmidt T."/>
            <person name="Gabaldon T."/>
            <person name="Lehrach H."/>
            <person name="Weisshaar B."/>
            <person name="Himmelbauer H."/>
        </authorList>
    </citation>
    <scope>NUCLEOTIDE SEQUENCE [LARGE SCALE GENOMIC DNA]</scope>
    <source>
        <strain>cv. Viroflay</strain>
        <tissue>Leaf</tissue>
    </source>
</reference>
<reference key="2">
    <citation type="journal article" date="2000" name="J. Biol. Chem.">
        <title>The plastid ribosomal proteins. Identification of all the proteins in the 50S subunit of an organelle ribosome (chloroplast).</title>
        <authorList>
            <person name="Yamaguchi K."/>
            <person name="Subramanian A.R."/>
        </authorList>
    </citation>
    <scope>PROTEIN SEQUENCE OF 45-73</scope>
    <scope>SUBUNIT</scope>
    <scope>SUBCELLULAR LOCATION</scope>
    <source>
        <strain>cv. Alwaro</strain>
        <tissue>Leaf</tissue>
    </source>
</reference>
<reference key="3">
    <citation type="journal article" date="2007" name="Proc. Natl. Acad. Sci. U.S.A.">
        <title>Cryo-EM study of the spinach chloroplast ribosome reveals the structural and functional roles of plastid-specific ribosomal proteins.</title>
        <authorList>
            <person name="Sharma M.R."/>
            <person name="Wilson D.N."/>
            <person name="Datta P.P."/>
            <person name="Barat C."/>
            <person name="Schluenzen F."/>
            <person name="Fucini P."/>
            <person name="Agrawal R.K."/>
        </authorList>
    </citation>
    <scope>STRUCTURE BY ELECTRON MICROSCOPY (9.4 ANGSTROMS)</scope>
</reference>
<reference key="4">
    <citation type="journal article" date="2016" name="Sci. Rep.">
        <title>Cryo-EM structure of the large subunit of the spinach chloroplast ribosome.</title>
        <authorList>
            <person name="Ahmed T."/>
            <person name="Yin Z."/>
            <person name="Bhushan S."/>
        </authorList>
    </citation>
    <scope>STRUCTURE BY ELECTRON MICROSCOPY (3.50 ANGSTROMS)</scope>
</reference>
<reference key="5">
    <citation type="journal article" date="2017" name="EMBO J.">
        <title>The complete structure of the chloroplast 70S ribosome in complex with translation factor pY.</title>
        <authorList>
            <person name="Bieri P."/>
            <person name="Leibundgut M."/>
            <person name="Saurer M."/>
            <person name="Boehringer D."/>
            <person name="Ban N."/>
        </authorList>
    </citation>
    <scope>STRUCTURE BY ELECTRON MICROSCOPY (3.25 ANGSTROMS)</scope>
    <scope>SUBUNIT</scope>
    <scope>SUBCELLULAR LOCATION</scope>
</reference>
<dbReference type="EMBL" id="KQ168860">
    <property type="protein sequence ID" value="KNA08833.1"/>
    <property type="molecule type" value="Genomic_DNA"/>
</dbReference>
<dbReference type="PDB" id="4V61">
    <property type="method" value="EM"/>
    <property type="resolution" value="9.40 A"/>
    <property type="chains" value="Q=45-73"/>
</dbReference>
<dbReference type="PDB" id="5H1S">
    <property type="method" value="EM"/>
    <property type="resolution" value="3.50 A"/>
    <property type="chains" value="Q=44-166"/>
</dbReference>
<dbReference type="PDB" id="5MLC">
    <property type="method" value="EM"/>
    <property type="resolution" value="3.90 A"/>
    <property type="chains" value="Q=1-166"/>
</dbReference>
<dbReference type="PDB" id="5MMI">
    <property type="method" value="EM"/>
    <property type="resolution" value="3.25 A"/>
    <property type="chains" value="P=1-166"/>
</dbReference>
<dbReference type="PDB" id="5MMM">
    <property type="method" value="EM"/>
    <property type="resolution" value="3.40 A"/>
    <property type="chains" value="P=1-166"/>
</dbReference>
<dbReference type="PDB" id="5X8P">
    <property type="method" value="EM"/>
    <property type="resolution" value="3.40 A"/>
    <property type="chains" value="P=44-166"/>
</dbReference>
<dbReference type="PDB" id="5X8T">
    <property type="method" value="EM"/>
    <property type="resolution" value="3.30 A"/>
    <property type="chains" value="P=44-166"/>
</dbReference>
<dbReference type="PDB" id="6ERI">
    <property type="method" value="EM"/>
    <property type="resolution" value="3.00 A"/>
    <property type="chains" value="AO=46-166"/>
</dbReference>
<dbReference type="PDBsum" id="4V61"/>
<dbReference type="PDBsum" id="5H1S"/>
<dbReference type="PDBsum" id="5MLC"/>
<dbReference type="PDBsum" id="5MMI"/>
<dbReference type="PDBsum" id="5MMM"/>
<dbReference type="PDBsum" id="5X8P"/>
<dbReference type="PDBsum" id="5X8T"/>
<dbReference type="PDBsum" id="6ERI"/>
<dbReference type="EMDB" id="EMD-3525"/>
<dbReference type="EMDB" id="EMD-3531"/>
<dbReference type="EMDB" id="EMD-3533"/>
<dbReference type="EMDB" id="EMD-3941"/>
<dbReference type="EMDB" id="EMD-6709"/>
<dbReference type="EMDB" id="EMD-6711"/>
<dbReference type="EMDB" id="EMD-9572"/>
<dbReference type="SMR" id="P82195"/>
<dbReference type="IntAct" id="P82195">
    <property type="interactions" value="1"/>
</dbReference>
<dbReference type="STRING" id="3562.P82195"/>
<dbReference type="OrthoDB" id="1932324at2759"/>
<dbReference type="Proteomes" id="UP001155700">
    <property type="component" value="Unplaced"/>
</dbReference>
<dbReference type="GO" id="GO:0009507">
    <property type="term" value="C:chloroplast"/>
    <property type="evidence" value="ECO:0007669"/>
    <property type="project" value="UniProtKB-SubCell"/>
</dbReference>
<dbReference type="GO" id="GO:1990904">
    <property type="term" value="C:ribonucleoprotein complex"/>
    <property type="evidence" value="ECO:0007669"/>
    <property type="project" value="UniProtKB-KW"/>
</dbReference>
<dbReference type="GO" id="GO:0005840">
    <property type="term" value="C:ribosome"/>
    <property type="evidence" value="ECO:0007669"/>
    <property type="project" value="UniProtKB-KW"/>
</dbReference>
<dbReference type="GO" id="GO:0008097">
    <property type="term" value="F:5S rRNA binding"/>
    <property type="evidence" value="ECO:0000318"/>
    <property type="project" value="GO_Central"/>
</dbReference>
<dbReference type="GO" id="GO:0003735">
    <property type="term" value="F:structural constituent of ribosome"/>
    <property type="evidence" value="ECO:0007669"/>
    <property type="project" value="InterPro"/>
</dbReference>
<dbReference type="GO" id="GO:0006412">
    <property type="term" value="P:translation"/>
    <property type="evidence" value="ECO:0007669"/>
    <property type="project" value="InterPro"/>
</dbReference>
<dbReference type="CDD" id="cd00432">
    <property type="entry name" value="Ribosomal_L18_L5e"/>
    <property type="match status" value="1"/>
</dbReference>
<dbReference type="FunFam" id="3.30.420.100:FF:000001">
    <property type="entry name" value="50S ribosomal protein L18"/>
    <property type="match status" value="1"/>
</dbReference>
<dbReference type="Gene3D" id="3.30.420.100">
    <property type="match status" value="1"/>
</dbReference>
<dbReference type="HAMAP" id="MF_01337_B">
    <property type="entry name" value="Ribosomal_uL18_B"/>
    <property type="match status" value="1"/>
</dbReference>
<dbReference type="InterPro" id="IPR004389">
    <property type="entry name" value="Ribosomal_uL18_bac-type"/>
</dbReference>
<dbReference type="InterPro" id="IPR005484">
    <property type="entry name" value="Ribosomal_uL18_bac/euk"/>
</dbReference>
<dbReference type="NCBIfam" id="TIGR00060">
    <property type="entry name" value="L18_bact"/>
    <property type="match status" value="1"/>
</dbReference>
<dbReference type="PANTHER" id="PTHR12899">
    <property type="entry name" value="39S RIBOSOMAL PROTEIN L18, MITOCHONDRIAL"/>
    <property type="match status" value="1"/>
</dbReference>
<dbReference type="PANTHER" id="PTHR12899:SF3">
    <property type="entry name" value="LARGE RIBOSOMAL SUBUNIT PROTEIN UL18M"/>
    <property type="match status" value="1"/>
</dbReference>
<dbReference type="Pfam" id="PF00861">
    <property type="entry name" value="Ribosomal_L18p"/>
    <property type="match status" value="1"/>
</dbReference>
<dbReference type="SUPFAM" id="SSF53137">
    <property type="entry name" value="Translational machinery components"/>
    <property type="match status" value="1"/>
</dbReference>
<accession>P82195</accession>
<accession>A0A0K9QQ60</accession>
<accession>P82196</accession>
<organism>
    <name type="scientific">Spinacia oleracea</name>
    <name type="common">Spinach</name>
    <dbReference type="NCBI Taxonomy" id="3562"/>
    <lineage>
        <taxon>Eukaryota</taxon>
        <taxon>Viridiplantae</taxon>
        <taxon>Streptophyta</taxon>
        <taxon>Embryophyta</taxon>
        <taxon>Tracheophyta</taxon>
        <taxon>Spermatophyta</taxon>
        <taxon>Magnoliopsida</taxon>
        <taxon>eudicotyledons</taxon>
        <taxon>Gunneridae</taxon>
        <taxon>Pentapetalae</taxon>
        <taxon>Caryophyllales</taxon>
        <taxon>Chenopodiaceae</taxon>
        <taxon>Chenopodioideae</taxon>
        <taxon>Anserineae</taxon>
        <taxon>Spinacia</taxon>
    </lineage>
</organism>
<proteinExistence type="evidence at protein level"/>
<gene>
    <name type="primary">RPL18</name>
    <name type="synonym">PRPL18</name>
    <name type="ORF">SOVF_159210</name>
</gene>
<keyword id="KW-0002">3D-structure</keyword>
<keyword id="KW-0150">Chloroplast</keyword>
<keyword id="KW-0903">Direct protein sequencing</keyword>
<keyword id="KW-0934">Plastid</keyword>
<keyword id="KW-1185">Reference proteome</keyword>
<keyword id="KW-0687">Ribonucleoprotein</keyword>
<keyword id="KW-0689">Ribosomal protein</keyword>
<keyword id="KW-0694">RNA-binding</keyword>
<keyword id="KW-0699">rRNA-binding</keyword>
<keyword id="KW-0809">Transit peptide</keyword>
<comment type="function">
    <text evidence="6 7">Component of the chloroplast ribosome (chloro-ribosome), a dedicated translation machinery responsible for the synthesis of chloroplast genome-encoded proteins, including proteins of the transcription and translation machinery and components of the photosynthetic apparatus.</text>
</comment>
<comment type="subunit">
    <text evidence="1 2">Component of the chloroplast large ribosomal subunit (LSU). Mature 70S chloroplast ribosomes of higher plants consist of a small (30S) and a large (50S) subunit. The 30S small subunit contains 1 molecule of ribosomal RNA (16S rRNA) and 24 different proteins. The 50S large subunit contains 3 rRNA molecules (23S, 5S and 4.5S rRNA) and 33 different proteins.</text>
</comment>
<comment type="subcellular location">
    <subcellularLocation>
        <location evidence="1 2">Plastid</location>
        <location evidence="1 2">Chloroplast</location>
    </subcellularLocation>
</comment>
<comment type="miscellaneous">
    <text evidence="1">There are two forms of L18, alpha and beta, both with a MW of 11.5 kDa. They probably differ by an unknown post-translational modification; their first 26 amino acids are identical.</text>
</comment>
<comment type="similarity">
    <text evidence="5">Belongs to the universal ribosomal protein uL18 family.</text>
</comment>
<sequence>MAAATSLSFFHSTLASSSSSSVQQLSLPPKFVNFRPQTLPLIQAKAHTRREDRTARHVRIRKKVEGTPERPRLCVFRSNKHLYVQVIDDTKMHTLAAASTMQKAISENIDYSAGPTVEVAQKIGEMIAKSCLEKGITKVAFDRGGYPYHGRVKALADAAREHGLVF</sequence>
<evidence type="ECO:0000269" key="1">
    <source>
    </source>
</evidence>
<evidence type="ECO:0000269" key="2">
    <source>
    </source>
</evidence>
<evidence type="ECO:0000303" key="3">
    <source>
    </source>
</evidence>
<evidence type="ECO:0000303" key="4">
    <source>
    </source>
</evidence>
<evidence type="ECO:0000305" key="5"/>
<evidence type="ECO:0000305" key="6">
    <source>
    </source>
</evidence>
<evidence type="ECO:0000305" key="7">
    <source>
    </source>
</evidence>
<evidence type="ECO:0007829" key="8">
    <source>
        <dbReference type="PDB" id="5H1S"/>
    </source>
</evidence>
<evidence type="ECO:0007829" key="9">
    <source>
        <dbReference type="PDB" id="5MMI"/>
    </source>
</evidence>
<evidence type="ECO:0007829" key="10">
    <source>
        <dbReference type="PDB" id="5X8T"/>
    </source>
</evidence>
<feature type="transit peptide" description="Chloroplast" evidence="1">
    <location>
        <begin position="1"/>
        <end position="44"/>
    </location>
</feature>
<feature type="chain" id="PRO_0000131429" description="Large ribosomal subunit protein uL18c">
    <location>
        <begin position="45"/>
        <end position="166"/>
    </location>
</feature>
<feature type="helix" evidence="9">
    <location>
        <begin position="49"/>
        <end position="63"/>
    </location>
</feature>
<feature type="strand" evidence="10">
    <location>
        <begin position="68"/>
        <end position="70"/>
    </location>
</feature>
<feature type="strand" evidence="9">
    <location>
        <begin position="72"/>
        <end position="78"/>
    </location>
</feature>
<feature type="strand" evidence="9">
    <location>
        <begin position="81"/>
        <end position="88"/>
    </location>
</feature>
<feature type="turn" evidence="9">
    <location>
        <begin position="89"/>
        <end position="92"/>
    </location>
</feature>
<feature type="strand" evidence="9">
    <location>
        <begin position="93"/>
        <end position="99"/>
    </location>
</feature>
<feature type="turn" evidence="8">
    <location>
        <begin position="100"/>
        <end position="102"/>
    </location>
</feature>
<feature type="helix" evidence="9">
    <location>
        <begin position="103"/>
        <end position="108"/>
    </location>
</feature>
<feature type="strand" evidence="9">
    <location>
        <begin position="112"/>
        <end position="114"/>
    </location>
</feature>
<feature type="helix" evidence="9">
    <location>
        <begin position="117"/>
        <end position="132"/>
    </location>
</feature>
<feature type="turn" evidence="9">
    <location>
        <begin position="133"/>
        <end position="135"/>
    </location>
</feature>
<feature type="strand" evidence="9">
    <location>
        <begin position="140"/>
        <end position="142"/>
    </location>
</feature>
<feature type="strand" evidence="8">
    <location>
        <begin position="144"/>
        <end position="146"/>
    </location>
</feature>
<feature type="helix" evidence="9">
    <location>
        <begin position="150"/>
        <end position="161"/>
    </location>
</feature>
<protein>
    <recommendedName>
        <fullName evidence="4">Large ribosomal subunit protein uL18c</fullName>
    </recommendedName>
    <alternativeName>
        <fullName evidence="3">50S ribosomal protein L18, chloroplastic</fullName>
    </alternativeName>
    <alternativeName>
        <fullName>CL18</fullName>
    </alternativeName>
</protein>